<comment type="function">
    <text evidence="2">Part of the small subunit (SSU) processome, first precursor of the small eukaryotic ribosomal subunit. During the assembly of the SSU processome in the nucleolus, many ribosome biogenesis factors, an RNA chaperone and ribosomal proteins associate with the nascent pre-rRNA and work in concert to generate RNA folding, modifications, rearrangements and cleavage as well as targeted degradation of pre-ribosomal RNA by the RNA exosome.</text>
</comment>
<comment type="function">
    <text evidence="2">Substrate-recognition component of a DCX (DDB1-CUL4-X-box) E3 ubiquitin-protein ligase complex.</text>
</comment>
<comment type="pathway">
    <text>Protein modification; protein ubiquitination.</text>
</comment>
<comment type="subunit">
    <text evidence="2">Part of the small subunit (SSU) processome, composed of more than 70 proteins and the RNA chaperone small nucleolar RNA (snoRNA) U3. Component of the DCX(DCAF13) E3 ubiquitin ligase complex, at least composed of CUL4 (CUL4A or CUL4B), DDB1, DCAF13 and RBX1.</text>
</comment>
<comment type="subcellular location">
    <subcellularLocation>
        <location evidence="2">Nucleus</location>
        <location evidence="2">Nucleolus</location>
    </subcellularLocation>
    <text evidence="2">In the nucleolus, localizes predominantly in the granular component, but also detected in the fibrillar center and dense fibrillar component.</text>
</comment>
<comment type="similarity">
    <text evidence="3">Belongs to the WD repeat DCAF13/WDSOF1 family.</text>
</comment>
<name>DCA13_CHICK</name>
<organism>
    <name type="scientific">Gallus gallus</name>
    <name type="common">Chicken</name>
    <dbReference type="NCBI Taxonomy" id="9031"/>
    <lineage>
        <taxon>Eukaryota</taxon>
        <taxon>Metazoa</taxon>
        <taxon>Chordata</taxon>
        <taxon>Craniata</taxon>
        <taxon>Vertebrata</taxon>
        <taxon>Euteleostomi</taxon>
        <taxon>Archelosauria</taxon>
        <taxon>Archosauria</taxon>
        <taxon>Dinosauria</taxon>
        <taxon>Saurischia</taxon>
        <taxon>Theropoda</taxon>
        <taxon>Coelurosauria</taxon>
        <taxon>Aves</taxon>
        <taxon>Neognathae</taxon>
        <taxon>Galloanserae</taxon>
        <taxon>Galliformes</taxon>
        <taxon>Phasianidae</taxon>
        <taxon>Phasianinae</taxon>
        <taxon>Gallus</taxon>
    </lineage>
</organism>
<evidence type="ECO:0000250" key="1">
    <source>
        <dbReference type="UniProtKB" id="Q6PAC3"/>
    </source>
</evidence>
<evidence type="ECO:0000250" key="2">
    <source>
        <dbReference type="UniProtKB" id="Q9NV06"/>
    </source>
</evidence>
<evidence type="ECO:0000305" key="3"/>
<sequence>MRVKVLSRNPDDYVRETKLDLQRVPRNYDPALHPFEVAREYVRALNATKLERVFAKPFLSSLDGHRDGVNCMAKHPKSLSTVLSGACDGEVRIWNLTKRQCIRALQAHEGFVRGMCARFCGTSFFTVGDDKTVKQWKMESPGYGEEEEPIHTILGKTVYTGIDHHWKDAVFATCGQQVDIWDEQRTSPMCSLTWGFDSISSVKFNPIETYLLGSCASDRNIVLYDMRQSTPLKKVILNMRTNTLCWNPMEAFIFTAANEDYNLYTFDMRFLTSPVMVHMDHVSAVLDVDYSPTGKEFVSASFDKSVRIFPVDKGHSREVYHTKRMQHVITVKWTSDSRYILCGSDEMNIRLWKANASEKLGVLAPREKAAMNYNQKLKEKFQHHPQIKRIARHRHLPKSIYCQIKEQRIMREARRRKELNRRKHSKPGSVPVVSEKKKHIVAVVQ</sequence>
<accession>Q5ZLK1</accession>
<proteinExistence type="evidence at transcript level"/>
<feature type="chain" id="PRO_0000310431" description="DDB1- and CUL4-associated factor 13">
    <location>
        <begin position="1"/>
        <end position="445"/>
    </location>
</feature>
<feature type="repeat" description="WD 1">
    <location>
        <begin position="64"/>
        <end position="104"/>
    </location>
</feature>
<feature type="repeat" description="WD 2">
    <location>
        <begin position="107"/>
        <end position="146"/>
    </location>
</feature>
<feature type="repeat" description="WD 3">
    <location>
        <begin position="149"/>
        <end position="191"/>
    </location>
</feature>
<feature type="repeat" description="WD 4">
    <location>
        <begin position="194"/>
        <end position="234"/>
    </location>
</feature>
<feature type="repeat" description="WD 5">
    <location>
        <begin position="236"/>
        <end position="276"/>
    </location>
</feature>
<feature type="repeat" description="WD 6">
    <location>
        <begin position="280"/>
        <end position="321"/>
    </location>
</feature>
<feature type="repeat" description="WD 7">
    <location>
        <begin position="323"/>
        <end position="362"/>
    </location>
</feature>
<feature type="region of interest" description="Required for nucleolar location" evidence="1">
    <location>
        <begin position="353"/>
        <end position="441"/>
    </location>
</feature>
<reference key="1">
    <citation type="journal article" date="2005" name="Genome Biol.">
        <title>Full-length cDNAs from chicken bursal lymphocytes to facilitate gene function analysis.</title>
        <authorList>
            <person name="Caldwell R.B."/>
            <person name="Kierzek A.M."/>
            <person name="Arakawa H."/>
            <person name="Bezzubov Y."/>
            <person name="Zaim J."/>
            <person name="Fiedler P."/>
            <person name="Kutter S."/>
            <person name="Blagodatski A."/>
            <person name="Kostovska D."/>
            <person name="Koter M."/>
            <person name="Plachy J."/>
            <person name="Carninci P."/>
            <person name="Hayashizaki Y."/>
            <person name="Buerstedde J.-M."/>
        </authorList>
    </citation>
    <scope>NUCLEOTIDE SEQUENCE [LARGE SCALE MRNA]</scope>
    <source>
        <strain>CB</strain>
        <tissue>Bursa of Fabricius</tissue>
    </source>
</reference>
<gene>
    <name type="primary">DCAF13</name>
    <name type="synonym">WDSOF1</name>
    <name type="ORF">RCJMB04_5m12</name>
</gene>
<dbReference type="EMBL" id="AJ719733">
    <property type="protein sequence ID" value="CAG31392.1"/>
    <property type="molecule type" value="mRNA"/>
</dbReference>
<dbReference type="RefSeq" id="NP_001026119.1">
    <property type="nucleotide sequence ID" value="NM_001030948.2"/>
</dbReference>
<dbReference type="SMR" id="Q5ZLK1"/>
<dbReference type="FunCoup" id="Q5ZLK1">
    <property type="interactions" value="2915"/>
</dbReference>
<dbReference type="STRING" id="9031.ENSGALP00000058494"/>
<dbReference type="PaxDb" id="9031-ENSGALP00000025851"/>
<dbReference type="GeneID" id="420263"/>
<dbReference type="KEGG" id="gga:420263"/>
<dbReference type="CTD" id="25879"/>
<dbReference type="VEuPathDB" id="HostDB:geneid_420263"/>
<dbReference type="eggNOG" id="KOG0268">
    <property type="taxonomic scope" value="Eukaryota"/>
</dbReference>
<dbReference type="HOGENOM" id="CLU_033999_0_0_1"/>
<dbReference type="InParanoid" id="Q5ZLK1"/>
<dbReference type="OMA" id="EDHNAYI"/>
<dbReference type="OrthoDB" id="10249065at2759"/>
<dbReference type="PhylomeDB" id="Q5ZLK1"/>
<dbReference type="TreeFam" id="TF300844"/>
<dbReference type="UniPathway" id="UPA00143"/>
<dbReference type="PRO" id="PR:Q5ZLK1"/>
<dbReference type="Proteomes" id="UP000000539">
    <property type="component" value="Unassembled WGS sequence"/>
</dbReference>
<dbReference type="GO" id="GO:0080008">
    <property type="term" value="C:Cul4-RING E3 ubiquitin ligase complex"/>
    <property type="evidence" value="ECO:0000250"/>
    <property type="project" value="UniProtKB"/>
</dbReference>
<dbReference type="GO" id="GO:0005730">
    <property type="term" value="C:nucleolus"/>
    <property type="evidence" value="ECO:0000250"/>
    <property type="project" value="UniProtKB"/>
</dbReference>
<dbReference type="GO" id="GO:0032040">
    <property type="term" value="C:small-subunit processome"/>
    <property type="evidence" value="ECO:0000318"/>
    <property type="project" value="GO_Central"/>
</dbReference>
<dbReference type="GO" id="GO:1990756">
    <property type="term" value="F:ubiquitin-like ligase-substrate adaptor activity"/>
    <property type="evidence" value="ECO:0000250"/>
    <property type="project" value="UniProtKB"/>
</dbReference>
<dbReference type="GO" id="GO:0000462">
    <property type="term" value="P:maturation of SSU-rRNA from tricistronic rRNA transcript (SSU-rRNA, 5.8S rRNA, LSU-rRNA)"/>
    <property type="evidence" value="ECO:0000318"/>
    <property type="project" value="GO_Central"/>
</dbReference>
<dbReference type="GO" id="GO:0001555">
    <property type="term" value="P:oocyte growth"/>
    <property type="evidence" value="ECO:0000250"/>
    <property type="project" value="UniProtKB"/>
</dbReference>
<dbReference type="GO" id="GO:0016567">
    <property type="term" value="P:protein ubiquitination"/>
    <property type="evidence" value="ECO:0007669"/>
    <property type="project" value="UniProtKB-UniPathway"/>
</dbReference>
<dbReference type="GO" id="GO:0006364">
    <property type="term" value="P:rRNA processing"/>
    <property type="evidence" value="ECO:0000250"/>
    <property type="project" value="UniProtKB"/>
</dbReference>
<dbReference type="CDD" id="cd00200">
    <property type="entry name" value="WD40"/>
    <property type="match status" value="1"/>
</dbReference>
<dbReference type="FunFam" id="2.130.10.10:FF:000132">
    <property type="entry name" value="DDB1- and CUL4-associated factor 13"/>
    <property type="match status" value="1"/>
</dbReference>
<dbReference type="FunFam" id="2.130.10.10:FF:000269">
    <property type="entry name" value="DDB1- and CUL4-associated factor 13"/>
    <property type="match status" value="1"/>
</dbReference>
<dbReference type="Gene3D" id="2.130.10.10">
    <property type="entry name" value="YVTN repeat-like/Quinoprotein amine dehydrogenase"/>
    <property type="match status" value="2"/>
</dbReference>
<dbReference type="InterPro" id="IPR007287">
    <property type="entry name" value="Sof1"/>
</dbReference>
<dbReference type="InterPro" id="IPR015943">
    <property type="entry name" value="WD40/YVTN_repeat-like_dom_sf"/>
</dbReference>
<dbReference type="InterPro" id="IPR019775">
    <property type="entry name" value="WD40_repeat_CS"/>
</dbReference>
<dbReference type="InterPro" id="IPR036322">
    <property type="entry name" value="WD40_repeat_dom_sf"/>
</dbReference>
<dbReference type="InterPro" id="IPR001680">
    <property type="entry name" value="WD40_rpt"/>
</dbReference>
<dbReference type="InterPro" id="IPR051733">
    <property type="entry name" value="WD_repeat_DCAF13/WDSOF1"/>
</dbReference>
<dbReference type="PANTHER" id="PTHR22851:SF0">
    <property type="entry name" value="DDB1- AND CUL4-ASSOCIATED FACTOR 13"/>
    <property type="match status" value="1"/>
</dbReference>
<dbReference type="PANTHER" id="PTHR22851">
    <property type="entry name" value="U3 SMALL NUCLEOLAR RNA U3 SNORNA ASSOCIATED PROTEIN"/>
    <property type="match status" value="1"/>
</dbReference>
<dbReference type="Pfam" id="PF04158">
    <property type="entry name" value="Sof1"/>
    <property type="match status" value="1"/>
</dbReference>
<dbReference type="Pfam" id="PF00400">
    <property type="entry name" value="WD40"/>
    <property type="match status" value="5"/>
</dbReference>
<dbReference type="SMART" id="SM00320">
    <property type="entry name" value="WD40"/>
    <property type="match status" value="5"/>
</dbReference>
<dbReference type="SUPFAM" id="SSF50978">
    <property type="entry name" value="WD40 repeat-like"/>
    <property type="match status" value="1"/>
</dbReference>
<dbReference type="PROSITE" id="PS00678">
    <property type="entry name" value="WD_REPEATS_1"/>
    <property type="match status" value="1"/>
</dbReference>
<dbReference type="PROSITE" id="PS50082">
    <property type="entry name" value="WD_REPEATS_2"/>
    <property type="match status" value="3"/>
</dbReference>
<dbReference type="PROSITE" id="PS50294">
    <property type="entry name" value="WD_REPEATS_REGION"/>
    <property type="match status" value="1"/>
</dbReference>
<protein>
    <recommendedName>
        <fullName>DDB1- and CUL4-associated factor 13</fullName>
    </recommendedName>
    <alternativeName>
        <fullName>WD repeat and SOF domain-containing protein 1</fullName>
    </alternativeName>
</protein>
<keyword id="KW-0539">Nucleus</keyword>
<keyword id="KW-1185">Reference proteome</keyword>
<keyword id="KW-0677">Repeat</keyword>
<keyword id="KW-0687">Ribonucleoprotein</keyword>
<keyword id="KW-0690">Ribosome biogenesis</keyword>
<keyword id="KW-0698">rRNA processing</keyword>
<keyword id="KW-0833">Ubl conjugation pathway</keyword>
<keyword id="KW-0853">WD repeat</keyword>